<sequence length="340" mass="38263">KKKSGIAMCVGCGSQIHDQYILRVAPDLEWHAACLKCSECSQYLDETCTCFVRDGKTYCKRDYVRLFGIKCAKCNIGFCSSDLVMRARDNVYHMECFRCSVCSRQLVPGDEFSLRDEELLCRADHGLLLERASAGSPISPGNILSRSFHIADPVSVRQPPHRNHVHKQSEKTTRVRTVLNEKQLHTLRTCYNANPRPDALMKEQLVEMTGLSPRVIRVWFQNKRCKDKKRTIFMKQLQQQHHIDKTNLQGLTGTPMVAGSPIRHDNTVLGNPVEVQTYQPPWKALSEFALQSDLDQPAFRQLVSFSESGSMGNSSGSDVTSLSSQLPDTPNSMVPSPMDT</sequence>
<gene>
    <name type="primary">isl2b</name>
</gene>
<feature type="chain" id="PRO_0000075758" description="Insulin gene enhancer protein ISL-2B">
    <location>
        <begin position="1" status="less than"/>
        <end position="340"/>
    </location>
</feature>
<feature type="domain" description="LIM zinc-binding 1" evidence="2">
    <location>
        <begin position="9"/>
        <end position="62"/>
    </location>
</feature>
<feature type="domain" description="LIM zinc-binding 2" evidence="2">
    <location>
        <begin position="71"/>
        <end position="125"/>
    </location>
</feature>
<feature type="DNA-binding region" description="Homeobox" evidence="1">
    <location>
        <begin position="172"/>
        <end position="231"/>
    </location>
</feature>
<feature type="region of interest" description="Disordered" evidence="3">
    <location>
        <begin position="307"/>
        <end position="340"/>
    </location>
</feature>
<feature type="compositionally biased region" description="Low complexity" evidence="3">
    <location>
        <begin position="307"/>
        <end position="317"/>
    </location>
</feature>
<feature type="compositionally biased region" description="Polar residues" evidence="3">
    <location>
        <begin position="318"/>
        <end position="340"/>
    </location>
</feature>
<feature type="non-terminal residue">
    <location>
        <position position="1"/>
    </location>
</feature>
<accession>P50212</accession>
<organism>
    <name type="scientific">Oncorhynchus tshawytscha</name>
    <name type="common">Chinook salmon</name>
    <name type="synonym">Salmo tshawytscha</name>
    <dbReference type="NCBI Taxonomy" id="74940"/>
    <lineage>
        <taxon>Eukaryota</taxon>
        <taxon>Metazoa</taxon>
        <taxon>Chordata</taxon>
        <taxon>Craniata</taxon>
        <taxon>Vertebrata</taxon>
        <taxon>Euteleostomi</taxon>
        <taxon>Actinopterygii</taxon>
        <taxon>Neopterygii</taxon>
        <taxon>Teleostei</taxon>
        <taxon>Protacanthopterygii</taxon>
        <taxon>Salmoniformes</taxon>
        <taxon>Salmonidae</taxon>
        <taxon>Salmoninae</taxon>
        <taxon>Oncorhynchus</taxon>
    </lineage>
</organism>
<keyword id="KW-0217">Developmental protein</keyword>
<keyword id="KW-0238">DNA-binding</keyword>
<keyword id="KW-0371">Homeobox</keyword>
<keyword id="KW-0440">LIM domain</keyword>
<keyword id="KW-0479">Metal-binding</keyword>
<keyword id="KW-0539">Nucleus</keyword>
<keyword id="KW-1185">Reference proteome</keyword>
<keyword id="KW-0677">Repeat</keyword>
<keyword id="KW-0862">Zinc</keyword>
<evidence type="ECO:0000255" key="1">
    <source>
        <dbReference type="PROSITE-ProRule" id="PRU00108"/>
    </source>
</evidence>
<evidence type="ECO:0000255" key="2">
    <source>
        <dbReference type="PROSITE-ProRule" id="PRU00125"/>
    </source>
</evidence>
<evidence type="ECO:0000256" key="3">
    <source>
        <dbReference type="SAM" id="MobiDB-lite"/>
    </source>
</evidence>
<protein>
    <recommendedName>
        <fullName>Insulin gene enhancer protein ISL-2B</fullName>
        <shortName>Islet-2B</shortName>
    </recommendedName>
</protein>
<comment type="function">
    <text>Binds to one of the cis-acting domain of the insulin gene enhancer. May be involved in subtype specialization of primary motoneurons.</text>
</comment>
<comment type="subcellular location">
    <subcellularLocation>
        <location>Nucleus</location>
    </subcellularLocation>
</comment>
<dbReference type="EMBL" id="X64884">
    <property type="protein sequence ID" value="CAA46102.1"/>
    <property type="molecule type" value="mRNA"/>
</dbReference>
<dbReference type="PIR" id="B55973">
    <property type="entry name" value="B55973"/>
</dbReference>
<dbReference type="SMR" id="P50212"/>
<dbReference type="Proteomes" id="UP000694402">
    <property type="component" value="Unplaced"/>
</dbReference>
<dbReference type="GO" id="GO:0005634">
    <property type="term" value="C:nucleus"/>
    <property type="evidence" value="ECO:0007669"/>
    <property type="project" value="UniProtKB-SubCell"/>
</dbReference>
<dbReference type="GO" id="GO:0000987">
    <property type="term" value="F:cis-regulatory region sequence-specific DNA binding"/>
    <property type="evidence" value="ECO:0007669"/>
    <property type="project" value="TreeGrafter"/>
</dbReference>
<dbReference type="GO" id="GO:0000981">
    <property type="term" value="F:DNA-binding transcription factor activity, RNA polymerase II-specific"/>
    <property type="evidence" value="ECO:0007669"/>
    <property type="project" value="InterPro"/>
</dbReference>
<dbReference type="GO" id="GO:0046872">
    <property type="term" value="F:metal ion binding"/>
    <property type="evidence" value="ECO:0007669"/>
    <property type="project" value="UniProtKB-KW"/>
</dbReference>
<dbReference type="GO" id="GO:0007409">
    <property type="term" value="P:axonogenesis"/>
    <property type="evidence" value="ECO:0007669"/>
    <property type="project" value="TreeGrafter"/>
</dbReference>
<dbReference type="GO" id="GO:0048665">
    <property type="term" value="P:neuron fate specification"/>
    <property type="evidence" value="ECO:0007669"/>
    <property type="project" value="InterPro"/>
</dbReference>
<dbReference type="GO" id="GO:0045944">
    <property type="term" value="P:positive regulation of transcription by RNA polymerase II"/>
    <property type="evidence" value="ECO:0007669"/>
    <property type="project" value="InterPro"/>
</dbReference>
<dbReference type="CDD" id="cd00086">
    <property type="entry name" value="homeodomain"/>
    <property type="match status" value="1"/>
</dbReference>
<dbReference type="CDD" id="cd09366">
    <property type="entry name" value="LIM1_Isl"/>
    <property type="match status" value="1"/>
</dbReference>
<dbReference type="CDD" id="cd09374">
    <property type="entry name" value="LIM2_Isl"/>
    <property type="match status" value="1"/>
</dbReference>
<dbReference type="FunFam" id="2.10.110.10:FF:000034">
    <property type="entry name" value="Insulin gene enhancer protein ISL"/>
    <property type="match status" value="1"/>
</dbReference>
<dbReference type="FunFam" id="1.10.10.60:FF:000041">
    <property type="entry name" value="insulin gene enhancer protein ISL-1"/>
    <property type="match status" value="1"/>
</dbReference>
<dbReference type="FunFam" id="2.10.110.10:FF:000068">
    <property type="entry name" value="Insulin gene enhancer protein ISL-2"/>
    <property type="match status" value="1"/>
</dbReference>
<dbReference type="Gene3D" id="2.10.110.10">
    <property type="entry name" value="Cysteine Rich Protein"/>
    <property type="match status" value="2"/>
</dbReference>
<dbReference type="Gene3D" id="1.10.10.60">
    <property type="entry name" value="Homeodomain-like"/>
    <property type="match status" value="1"/>
</dbReference>
<dbReference type="InterPro" id="IPR001356">
    <property type="entry name" value="HD"/>
</dbReference>
<dbReference type="InterPro" id="IPR017970">
    <property type="entry name" value="Homeobox_CS"/>
</dbReference>
<dbReference type="InterPro" id="IPR009057">
    <property type="entry name" value="Homeodomain-like_sf"/>
</dbReference>
<dbReference type="InterPro" id="IPR047169">
    <property type="entry name" value="ISL1/2-like"/>
</dbReference>
<dbReference type="InterPro" id="IPR047244">
    <property type="entry name" value="ISL1/2-like_LIM1"/>
</dbReference>
<dbReference type="InterPro" id="IPR001781">
    <property type="entry name" value="Znf_LIM"/>
</dbReference>
<dbReference type="PANTHER" id="PTHR24204">
    <property type="entry name" value="INSULIN GENE ENHANCER PROTEIN"/>
    <property type="match status" value="1"/>
</dbReference>
<dbReference type="PANTHER" id="PTHR24204:SF2">
    <property type="entry name" value="INSULIN GENE ENHANCER PROTEIN ISL-2"/>
    <property type="match status" value="1"/>
</dbReference>
<dbReference type="Pfam" id="PF00046">
    <property type="entry name" value="Homeodomain"/>
    <property type="match status" value="1"/>
</dbReference>
<dbReference type="Pfam" id="PF00412">
    <property type="entry name" value="LIM"/>
    <property type="match status" value="2"/>
</dbReference>
<dbReference type="SMART" id="SM00389">
    <property type="entry name" value="HOX"/>
    <property type="match status" value="1"/>
</dbReference>
<dbReference type="SMART" id="SM00132">
    <property type="entry name" value="LIM"/>
    <property type="match status" value="2"/>
</dbReference>
<dbReference type="SUPFAM" id="SSF57716">
    <property type="entry name" value="Glucocorticoid receptor-like (DNA-binding domain)"/>
    <property type="match status" value="2"/>
</dbReference>
<dbReference type="SUPFAM" id="SSF46689">
    <property type="entry name" value="Homeodomain-like"/>
    <property type="match status" value="1"/>
</dbReference>
<dbReference type="PROSITE" id="PS00027">
    <property type="entry name" value="HOMEOBOX_1"/>
    <property type="match status" value="1"/>
</dbReference>
<dbReference type="PROSITE" id="PS50071">
    <property type="entry name" value="HOMEOBOX_2"/>
    <property type="match status" value="1"/>
</dbReference>
<dbReference type="PROSITE" id="PS00478">
    <property type="entry name" value="LIM_DOMAIN_1"/>
    <property type="match status" value="2"/>
</dbReference>
<dbReference type="PROSITE" id="PS50023">
    <property type="entry name" value="LIM_DOMAIN_2"/>
    <property type="match status" value="2"/>
</dbReference>
<proteinExistence type="evidence at transcript level"/>
<reference key="1">
    <citation type="journal article" date="1995" name="J. Biol. Chem.">
        <title>Presence of isl-1-related LIM domain homeobox genes in teleost and their similar patterns of expression in brain and spinal cord.</title>
        <authorList>
            <person name="Gong Z."/>
            <person name="Hui C.-C."/>
            <person name="Hew C.-L."/>
        </authorList>
    </citation>
    <scope>NUCLEOTIDE SEQUENCE [MRNA]</scope>
    <source>
        <tissue>Pituitary</tissue>
    </source>
</reference>
<reference key="2">
    <citation type="journal article" date="1995" name="Biochim. Biophys. Acta">
        <title>Several splicing variants of isl-1 like genes in the chinook salmon (Oncorhynchus tschawytscha) encode truncated transcription factors containing a complete LIM domain.</title>
        <authorList>
            <person name="Gong Z."/>
            <person name="Hew C.-L."/>
        </authorList>
    </citation>
    <scope>NUCLEOTIDE SEQUENCE [MRNA]</scope>
    <source>
        <tissue>Pituitary</tissue>
    </source>
</reference>
<name>ISL2B_ONCTS</name>